<proteinExistence type="evidence at transcript level"/>
<name>ADH1B_PANTR</name>
<keyword id="KW-0007">Acetylation</keyword>
<keyword id="KW-0963">Cytoplasm</keyword>
<keyword id="KW-0443">Lipid metabolism</keyword>
<keyword id="KW-0479">Metal-binding</keyword>
<keyword id="KW-0520">NAD</keyword>
<keyword id="KW-0560">Oxidoreductase</keyword>
<keyword id="KW-0597">Phosphoprotein</keyword>
<keyword id="KW-1185">Reference proteome</keyword>
<keyword id="KW-0862">Zinc</keyword>
<accession>Q5R1W2</accession>
<comment type="function">
    <text evidence="2">Catalyzes the NAD-dependent oxidation of all-trans-retinol and its derivatives such as all-trans-4-hydroxyretinol and may participate in retinoid metabolism. In vitro can also catalyze the NADH-dependent reduction of all-trans-retinal and its derivatives such as all-trans-4-oxoretinal. Catalyzes in the oxidative direction with higher efficiency. Has the same affinity for all-trans-4-hydroxyretinol and all-trans-4-oxoretinal.</text>
</comment>
<comment type="catalytic activity">
    <reaction evidence="2">
        <text>all-trans-retinol + NAD(+) = all-trans-retinal + NADH + H(+)</text>
        <dbReference type="Rhea" id="RHEA:21284"/>
        <dbReference type="ChEBI" id="CHEBI:15378"/>
        <dbReference type="ChEBI" id="CHEBI:17336"/>
        <dbReference type="ChEBI" id="CHEBI:17898"/>
        <dbReference type="ChEBI" id="CHEBI:57540"/>
        <dbReference type="ChEBI" id="CHEBI:57945"/>
        <dbReference type="EC" id="1.1.1.105"/>
    </reaction>
    <physiologicalReaction direction="left-to-right" evidence="2">
        <dbReference type="Rhea" id="RHEA:21285"/>
    </physiologicalReaction>
</comment>
<comment type="catalytic activity">
    <reaction evidence="2">
        <text>all-trans-4-hydroxyretinol + NAD(+) = all-trans-4-hydroxyretinal + NADH + H(+)</text>
        <dbReference type="Rhea" id="RHEA:55936"/>
        <dbReference type="ChEBI" id="CHEBI:15378"/>
        <dbReference type="ChEBI" id="CHEBI:57540"/>
        <dbReference type="ChEBI" id="CHEBI:57945"/>
        <dbReference type="ChEBI" id="CHEBI:132259"/>
        <dbReference type="ChEBI" id="CHEBI:139346"/>
    </reaction>
    <physiologicalReaction direction="left-to-right" evidence="2">
        <dbReference type="Rhea" id="RHEA:55937"/>
    </physiologicalReaction>
</comment>
<comment type="catalytic activity">
    <reaction evidence="2">
        <text>all-trans-4-oxoretinol + NAD(+) = all-trans-4-oxoretinal + NADH + H(+)</text>
        <dbReference type="Rhea" id="RHEA:60632"/>
        <dbReference type="ChEBI" id="CHEBI:15378"/>
        <dbReference type="ChEBI" id="CHEBI:44597"/>
        <dbReference type="ChEBI" id="CHEBI:57540"/>
        <dbReference type="ChEBI" id="CHEBI:57945"/>
        <dbReference type="ChEBI" id="CHEBI:139347"/>
    </reaction>
</comment>
<comment type="cofactor">
    <cofactor evidence="1">
        <name>Zn(2+)</name>
        <dbReference type="ChEBI" id="CHEBI:29105"/>
    </cofactor>
    <text evidence="1">Binds 2 Zn(2+) ions per subunit.</text>
</comment>
<comment type="subunit">
    <text evidence="1">Homodimer or heterodimer of closely related subunits.</text>
</comment>
<comment type="subcellular location">
    <subcellularLocation>
        <location evidence="1">Cytoplasm</location>
    </subcellularLocation>
</comment>
<comment type="similarity">
    <text evidence="3">Belongs to the zinc-containing alcohol dehydrogenase family.</text>
</comment>
<organism>
    <name type="scientific">Pan troglodytes</name>
    <name type="common">Chimpanzee</name>
    <dbReference type="NCBI Taxonomy" id="9598"/>
    <lineage>
        <taxon>Eukaryota</taxon>
        <taxon>Metazoa</taxon>
        <taxon>Chordata</taxon>
        <taxon>Craniata</taxon>
        <taxon>Vertebrata</taxon>
        <taxon>Euteleostomi</taxon>
        <taxon>Mammalia</taxon>
        <taxon>Eutheria</taxon>
        <taxon>Euarchontoglires</taxon>
        <taxon>Primates</taxon>
        <taxon>Haplorrhini</taxon>
        <taxon>Catarrhini</taxon>
        <taxon>Hominidae</taxon>
        <taxon>Pan</taxon>
    </lineage>
</organism>
<evidence type="ECO:0000250" key="1"/>
<evidence type="ECO:0000250" key="2">
    <source>
        <dbReference type="UniProtKB" id="P00325"/>
    </source>
</evidence>
<evidence type="ECO:0000305" key="3"/>
<protein>
    <recommendedName>
        <fullName evidence="2">All-trans-retinol dehydrogenase [NAD(+)] ADH1B</fullName>
        <ecNumber evidence="2">1.1.1.105</ecNumber>
    </recommendedName>
    <alternativeName>
        <fullName evidence="2">Alcohol dehydrogenase 1B</fullName>
    </alternativeName>
    <alternativeName>
        <fullName>Alcohol dehydrogenase subunit beta</fullName>
    </alternativeName>
</protein>
<feature type="initiator methionine" description="Removed" evidence="2">
    <location>
        <position position="1"/>
    </location>
</feature>
<feature type="chain" id="PRO_0000160662" description="All-trans-retinol dehydrogenase [NAD(+)] ADH1B">
    <location>
        <begin position="2"/>
        <end position="375"/>
    </location>
</feature>
<feature type="binding site" evidence="1">
    <location>
        <position position="47"/>
    </location>
    <ligand>
        <name>Zn(2+)</name>
        <dbReference type="ChEBI" id="CHEBI:29105"/>
        <label>1</label>
        <note>catalytic</note>
    </ligand>
</feature>
<feature type="binding site" evidence="1">
    <location>
        <position position="68"/>
    </location>
    <ligand>
        <name>Zn(2+)</name>
        <dbReference type="ChEBI" id="CHEBI:29105"/>
        <label>1</label>
        <note>catalytic</note>
    </ligand>
</feature>
<feature type="binding site" evidence="1">
    <location>
        <position position="98"/>
    </location>
    <ligand>
        <name>Zn(2+)</name>
        <dbReference type="ChEBI" id="CHEBI:29105"/>
        <label>2</label>
    </ligand>
</feature>
<feature type="binding site" evidence="1">
    <location>
        <position position="101"/>
    </location>
    <ligand>
        <name>Zn(2+)</name>
        <dbReference type="ChEBI" id="CHEBI:29105"/>
        <label>2</label>
    </ligand>
</feature>
<feature type="binding site" evidence="1">
    <location>
        <position position="104"/>
    </location>
    <ligand>
        <name>Zn(2+)</name>
        <dbReference type="ChEBI" id="CHEBI:29105"/>
        <label>2</label>
    </ligand>
</feature>
<feature type="binding site" evidence="1">
    <location>
        <position position="112"/>
    </location>
    <ligand>
        <name>Zn(2+)</name>
        <dbReference type="ChEBI" id="CHEBI:29105"/>
        <label>2</label>
    </ligand>
</feature>
<feature type="binding site" evidence="1">
    <location>
        <position position="175"/>
    </location>
    <ligand>
        <name>Zn(2+)</name>
        <dbReference type="ChEBI" id="CHEBI:29105"/>
        <label>1</label>
        <note>catalytic</note>
    </ligand>
</feature>
<feature type="binding site" evidence="1">
    <location>
        <begin position="200"/>
        <end position="205"/>
    </location>
    <ligand>
        <name>NAD(+)</name>
        <dbReference type="ChEBI" id="CHEBI:57540"/>
    </ligand>
</feature>
<feature type="binding site" evidence="1">
    <location>
        <position position="224"/>
    </location>
    <ligand>
        <name>NAD(+)</name>
        <dbReference type="ChEBI" id="CHEBI:57540"/>
    </ligand>
</feature>
<feature type="binding site" evidence="1">
    <location>
        <position position="229"/>
    </location>
    <ligand>
        <name>NAD(+)</name>
        <dbReference type="ChEBI" id="CHEBI:57540"/>
    </ligand>
</feature>
<feature type="binding site" evidence="1">
    <location>
        <begin position="293"/>
        <end position="295"/>
    </location>
    <ligand>
        <name>NAD(+)</name>
        <dbReference type="ChEBI" id="CHEBI:57540"/>
    </ligand>
</feature>
<feature type="binding site" evidence="1">
    <location>
        <position position="370"/>
    </location>
    <ligand>
        <name>NAD(+)</name>
        <dbReference type="ChEBI" id="CHEBI:57540"/>
    </ligand>
</feature>
<feature type="modified residue" description="N-acetylserine" evidence="2">
    <location>
        <position position="2"/>
    </location>
</feature>
<feature type="modified residue" description="Phosphoserine" evidence="2">
    <location>
        <position position="23"/>
    </location>
</feature>
<feature type="modified residue" description="Phosphotyrosine" evidence="2">
    <location>
        <position position="35"/>
    </location>
</feature>
<dbReference type="EC" id="1.1.1.105" evidence="2"/>
<dbReference type="EMBL" id="AB188285">
    <property type="protein sequence ID" value="BAD74036.1"/>
    <property type="molecule type" value="mRNA"/>
</dbReference>
<dbReference type="RefSeq" id="NP_001029330.1">
    <property type="nucleotide sequence ID" value="NM_001034158.1"/>
</dbReference>
<dbReference type="SMR" id="Q5R1W2"/>
<dbReference type="FunCoup" id="Q5R1W2">
    <property type="interactions" value="271"/>
</dbReference>
<dbReference type="STRING" id="9598.ENSPTRP00000071388"/>
<dbReference type="PaxDb" id="9598-ENSPTRP00000028001"/>
<dbReference type="Ensembl" id="ENSPTRT00000030335.6">
    <property type="protein sequence ID" value="ENSPTRP00000028001.5"/>
    <property type="gene ID" value="ENSPTRG00000039360.2"/>
</dbReference>
<dbReference type="Ensembl" id="ENSPTRT00000086655.1">
    <property type="protein sequence ID" value="ENSPTRP00000071388.1"/>
    <property type="gene ID" value="ENSPTRG00000039360.2"/>
</dbReference>
<dbReference type="GeneID" id="461396"/>
<dbReference type="KEGG" id="ptr:461396"/>
<dbReference type="CTD" id="125"/>
<dbReference type="eggNOG" id="KOG0022">
    <property type="taxonomic scope" value="Eukaryota"/>
</dbReference>
<dbReference type="GeneTree" id="ENSGT00940000155234"/>
<dbReference type="HOGENOM" id="CLU_026673_14_0_1"/>
<dbReference type="InParanoid" id="Q5R1W2"/>
<dbReference type="OrthoDB" id="1241at9604"/>
<dbReference type="TreeFam" id="TF300429"/>
<dbReference type="Proteomes" id="UP000002277">
    <property type="component" value="Chromosome 4"/>
</dbReference>
<dbReference type="Bgee" id="ENSPTRG00000039360">
    <property type="expression patterns" value="Expressed in liver and 20 other cell types or tissues"/>
</dbReference>
<dbReference type="GO" id="GO:0036064">
    <property type="term" value="C:ciliary basal body"/>
    <property type="evidence" value="ECO:0007669"/>
    <property type="project" value="Ensembl"/>
</dbReference>
<dbReference type="GO" id="GO:0005829">
    <property type="term" value="C:cytosol"/>
    <property type="evidence" value="ECO:0000318"/>
    <property type="project" value="GO_Central"/>
</dbReference>
<dbReference type="GO" id="GO:0005654">
    <property type="term" value="C:nucleoplasm"/>
    <property type="evidence" value="ECO:0007669"/>
    <property type="project" value="Ensembl"/>
</dbReference>
<dbReference type="GO" id="GO:0005886">
    <property type="term" value="C:plasma membrane"/>
    <property type="evidence" value="ECO:0007669"/>
    <property type="project" value="Ensembl"/>
</dbReference>
<dbReference type="GO" id="GO:0004745">
    <property type="term" value="F:all-trans-retinol dehydrogenase (NAD+) activity"/>
    <property type="evidence" value="ECO:0000250"/>
    <property type="project" value="UniProtKB"/>
</dbReference>
<dbReference type="GO" id="GO:0008270">
    <property type="term" value="F:zinc ion binding"/>
    <property type="evidence" value="ECO:0000318"/>
    <property type="project" value="GO_Central"/>
</dbReference>
<dbReference type="GO" id="GO:0042573">
    <property type="term" value="P:retinoic acid metabolic process"/>
    <property type="evidence" value="ECO:0000318"/>
    <property type="project" value="GO_Central"/>
</dbReference>
<dbReference type="GO" id="GO:0001523">
    <property type="term" value="P:retinoid metabolic process"/>
    <property type="evidence" value="ECO:0000250"/>
    <property type="project" value="UniProtKB"/>
</dbReference>
<dbReference type="GO" id="GO:0042572">
    <property type="term" value="P:retinol metabolic process"/>
    <property type="evidence" value="ECO:0000318"/>
    <property type="project" value="GO_Central"/>
</dbReference>
<dbReference type="CDD" id="cd08299">
    <property type="entry name" value="alcohol_DH_class_I_II_IV"/>
    <property type="match status" value="1"/>
</dbReference>
<dbReference type="FunFam" id="3.40.50.720:FF:000003">
    <property type="entry name" value="S-(hydroxymethyl)glutathione dehydrogenase"/>
    <property type="match status" value="1"/>
</dbReference>
<dbReference type="FunFam" id="3.90.180.10:FF:000001">
    <property type="entry name" value="S-(hydroxymethyl)glutathione dehydrogenase"/>
    <property type="match status" value="1"/>
</dbReference>
<dbReference type="Gene3D" id="3.90.180.10">
    <property type="entry name" value="Medium-chain alcohol dehydrogenases, catalytic domain"/>
    <property type="match status" value="1"/>
</dbReference>
<dbReference type="Gene3D" id="3.40.50.720">
    <property type="entry name" value="NAD(P)-binding Rossmann-like Domain"/>
    <property type="match status" value="1"/>
</dbReference>
<dbReference type="InterPro" id="IPR013149">
    <property type="entry name" value="ADH-like_C"/>
</dbReference>
<dbReference type="InterPro" id="IPR013154">
    <property type="entry name" value="ADH-like_N"/>
</dbReference>
<dbReference type="InterPro" id="IPR002328">
    <property type="entry name" value="ADH_Zn_CS"/>
</dbReference>
<dbReference type="InterPro" id="IPR011032">
    <property type="entry name" value="GroES-like_sf"/>
</dbReference>
<dbReference type="InterPro" id="IPR036291">
    <property type="entry name" value="NAD(P)-bd_dom_sf"/>
</dbReference>
<dbReference type="InterPro" id="IPR020843">
    <property type="entry name" value="PKS_ER"/>
</dbReference>
<dbReference type="PANTHER" id="PTHR43880">
    <property type="entry name" value="ALCOHOL DEHYDROGENASE"/>
    <property type="match status" value="1"/>
</dbReference>
<dbReference type="PANTHER" id="PTHR43880:SF11">
    <property type="entry name" value="ALL-TRANS-RETINOL DEHYDROGENASE [NAD(+)] ADH1B"/>
    <property type="match status" value="1"/>
</dbReference>
<dbReference type="Pfam" id="PF08240">
    <property type="entry name" value="ADH_N"/>
    <property type="match status" value="1"/>
</dbReference>
<dbReference type="Pfam" id="PF00107">
    <property type="entry name" value="ADH_zinc_N"/>
    <property type="match status" value="1"/>
</dbReference>
<dbReference type="SMART" id="SM00829">
    <property type="entry name" value="PKS_ER"/>
    <property type="match status" value="1"/>
</dbReference>
<dbReference type="SUPFAM" id="SSF50129">
    <property type="entry name" value="GroES-like"/>
    <property type="match status" value="2"/>
</dbReference>
<dbReference type="SUPFAM" id="SSF51735">
    <property type="entry name" value="NAD(P)-binding Rossmann-fold domains"/>
    <property type="match status" value="1"/>
</dbReference>
<dbReference type="PROSITE" id="PS00059">
    <property type="entry name" value="ADH_ZINC"/>
    <property type="match status" value="1"/>
</dbReference>
<sequence length="375" mass="39826">MSTAGKVIKCKAAVLWEVKKPFSIEDVEVAPPKAYEVRIKMVAVGICRTDDHVVSGNLVTPLPAILGHEAAGIVESVGEGVTTVKPGDKVIPLFTPQCGKCRVCKNPESNYCLKNDLGNPRGTLQDGTRRFTCRGKPIHHFLGTSTFSQYTVVDENAVAKIDAASPLEKVCLIGCGFSTGYGSAVNVAKVTPGSTCAVFGLGGVGLSAVMGCKAAGAARIIAVDINKDKFAKAKELGATECINPQDYKKPIQEVLKEMTDGGVDFSFEVIGRLDTMMASLLCCHEACGTSVIVGVPPASQNLSINPMLLLTGRTWKGAVYGGFKSKEGIPKLVADFMAKKFSLDALITHVLPFEKINEGFDLLHSGKSIRTVLTF</sequence>
<reference key="1">
    <citation type="submission" date="2004-08" db="EMBL/GenBank/DDBJ databases">
        <authorList>
            <person name="Hirai M."/>
            <person name="Sakate R."/>
            <person name="Hida M."/>
            <person name="Sugano S."/>
            <person name="Hayasaka I."/>
            <person name="Suto Y."/>
            <person name="Osada N."/>
            <person name="Hashimoto K."/>
        </authorList>
    </citation>
    <scope>NUCLEOTIDE SEQUENCE [MRNA]</scope>
    <source>
        <tissue>Skin</tissue>
    </source>
</reference>
<gene>
    <name evidence="2" type="primary">ADH1B</name>
</gene>